<reference key="1">
    <citation type="journal article" date="1999" name="Nature">
        <title>Sequence and analysis of chromosome 2 of the plant Arabidopsis thaliana.</title>
        <authorList>
            <person name="Lin X."/>
            <person name="Kaul S."/>
            <person name="Rounsley S.D."/>
            <person name="Shea T.P."/>
            <person name="Benito M.-I."/>
            <person name="Town C.D."/>
            <person name="Fujii C.Y."/>
            <person name="Mason T.M."/>
            <person name="Bowman C.L."/>
            <person name="Barnstead M.E."/>
            <person name="Feldblyum T.V."/>
            <person name="Buell C.R."/>
            <person name="Ketchum K.A."/>
            <person name="Lee J.J."/>
            <person name="Ronning C.M."/>
            <person name="Koo H.L."/>
            <person name="Moffat K.S."/>
            <person name="Cronin L.A."/>
            <person name="Shen M."/>
            <person name="Pai G."/>
            <person name="Van Aken S."/>
            <person name="Umayam L."/>
            <person name="Tallon L.J."/>
            <person name="Gill J.E."/>
            <person name="Adams M.D."/>
            <person name="Carrera A.J."/>
            <person name="Creasy T.H."/>
            <person name="Goodman H.M."/>
            <person name="Somerville C.R."/>
            <person name="Copenhaver G.P."/>
            <person name="Preuss D."/>
            <person name="Nierman W.C."/>
            <person name="White O."/>
            <person name="Eisen J.A."/>
            <person name="Salzberg S.L."/>
            <person name="Fraser C.M."/>
            <person name="Venter J.C."/>
        </authorList>
    </citation>
    <scope>NUCLEOTIDE SEQUENCE [LARGE SCALE GENOMIC DNA]</scope>
    <source>
        <strain>cv. Columbia</strain>
    </source>
</reference>
<reference key="2">
    <citation type="journal article" date="2017" name="Plant J.">
        <title>Araport11: a complete reannotation of the Arabidopsis thaliana reference genome.</title>
        <authorList>
            <person name="Cheng C.Y."/>
            <person name="Krishnakumar V."/>
            <person name="Chan A.P."/>
            <person name="Thibaud-Nissen F."/>
            <person name="Schobel S."/>
            <person name="Town C.D."/>
        </authorList>
    </citation>
    <scope>GENOME REANNOTATION</scope>
    <source>
        <strain>cv. Columbia</strain>
    </source>
</reference>
<reference key="3">
    <citation type="journal article" date="2002" name="Science">
        <title>Functional annotation of a full-length Arabidopsis cDNA collection.</title>
        <authorList>
            <person name="Seki M."/>
            <person name="Narusaka M."/>
            <person name="Kamiya A."/>
            <person name="Ishida J."/>
            <person name="Satou M."/>
            <person name="Sakurai T."/>
            <person name="Nakajima M."/>
            <person name="Enju A."/>
            <person name="Akiyama K."/>
            <person name="Oono Y."/>
            <person name="Muramatsu M."/>
            <person name="Hayashizaki Y."/>
            <person name="Kawai J."/>
            <person name="Carninci P."/>
            <person name="Itoh M."/>
            <person name="Ishii Y."/>
            <person name="Arakawa T."/>
            <person name="Shibata K."/>
            <person name="Shinagawa A."/>
            <person name="Shinozaki K."/>
        </authorList>
    </citation>
    <scope>NUCLEOTIDE SEQUENCE [LARGE SCALE MRNA]</scope>
    <source>
        <strain>cv. Columbia</strain>
    </source>
</reference>
<reference key="4">
    <citation type="journal article" date="2003" name="Science">
        <title>Empirical analysis of transcriptional activity in the Arabidopsis genome.</title>
        <authorList>
            <person name="Yamada K."/>
            <person name="Lim J."/>
            <person name="Dale J.M."/>
            <person name="Chen H."/>
            <person name="Shinn P."/>
            <person name="Palm C.J."/>
            <person name="Southwick A.M."/>
            <person name="Wu H.C."/>
            <person name="Kim C.J."/>
            <person name="Nguyen M."/>
            <person name="Pham P.K."/>
            <person name="Cheuk R.F."/>
            <person name="Karlin-Newmann G."/>
            <person name="Liu S.X."/>
            <person name="Lam B."/>
            <person name="Sakano H."/>
            <person name="Wu T."/>
            <person name="Yu G."/>
            <person name="Miranda M."/>
            <person name="Quach H.L."/>
            <person name="Tripp M."/>
            <person name="Chang C.H."/>
            <person name="Lee J.M."/>
            <person name="Toriumi M.J."/>
            <person name="Chan M.M."/>
            <person name="Tang C.C."/>
            <person name="Onodera C.S."/>
            <person name="Deng J.M."/>
            <person name="Akiyama K."/>
            <person name="Ansari Y."/>
            <person name="Arakawa T."/>
            <person name="Banh J."/>
            <person name="Banno F."/>
            <person name="Bowser L."/>
            <person name="Brooks S.Y."/>
            <person name="Carninci P."/>
            <person name="Chao Q."/>
            <person name="Choy N."/>
            <person name="Enju A."/>
            <person name="Goldsmith A.D."/>
            <person name="Gurjal M."/>
            <person name="Hansen N.F."/>
            <person name="Hayashizaki Y."/>
            <person name="Johnson-Hopson C."/>
            <person name="Hsuan V.W."/>
            <person name="Iida K."/>
            <person name="Karnes M."/>
            <person name="Khan S."/>
            <person name="Koesema E."/>
            <person name="Ishida J."/>
            <person name="Jiang P.X."/>
            <person name="Jones T."/>
            <person name="Kawai J."/>
            <person name="Kamiya A."/>
            <person name="Meyers C."/>
            <person name="Nakajima M."/>
            <person name="Narusaka M."/>
            <person name="Seki M."/>
            <person name="Sakurai T."/>
            <person name="Satou M."/>
            <person name="Tamse R."/>
            <person name="Vaysberg M."/>
            <person name="Wallender E.K."/>
            <person name="Wong C."/>
            <person name="Yamamura Y."/>
            <person name="Yuan S."/>
            <person name="Shinozaki K."/>
            <person name="Davis R.W."/>
            <person name="Theologis A."/>
            <person name="Ecker J.R."/>
        </authorList>
    </citation>
    <scope>NUCLEOTIDE SEQUENCE [LARGE SCALE MRNA]</scope>
    <source>
        <strain>cv. Columbia</strain>
    </source>
</reference>
<protein>
    <recommendedName>
        <fullName evidence="1">Cytoplasmic tRNA 2-thiolation protein 1</fullName>
        <ecNumber evidence="1">2.7.7.-</ecNumber>
    </recommendedName>
    <alternativeName>
        <fullName evidence="1">Cytoplasmic tRNA adenylyltransferase 1</fullName>
    </alternativeName>
</protein>
<keyword id="KW-0025">Alternative splicing</keyword>
<keyword id="KW-0963">Cytoplasm</keyword>
<keyword id="KW-1185">Reference proteome</keyword>
<keyword id="KW-0694">RNA-binding</keyword>
<keyword id="KW-0808">Transferase</keyword>
<keyword id="KW-0819">tRNA processing</keyword>
<keyword id="KW-0820">tRNA-binding</keyword>
<evidence type="ECO:0000255" key="1">
    <source>
        <dbReference type="HAMAP-Rule" id="MF_03053"/>
    </source>
</evidence>
<evidence type="ECO:0000256" key="2">
    <source>
        <dbReference type="SAM" id="MobiDB-lite"/>
    </source>
</evidence>
<evidence type="ECO:0000305" key="3"/>
<gene>
    <name evidence="1" type="primary">NCS6</name>
    <name evidence="1" type="synonym">CTU1</name>
    <name type="ordered locus">At2g44270</name>
    <name type="ORF">F4I1.8</name>
</gene>
<name>CTU1_ARATH</name>
<dbReference type="EC" id="2.7.7.-" evidence="1"/>
<dbReference type="EMBL" id="AC004521">
    <property type="protein sequence ID" value="AAC16077.1"/>
    <property type="status" value="ALT_SEQ"/>
    <property type="molecule type" value="Genomic_DNA"/>
</dbReference>
<dbReference type="EMBL" id="CP002685">
    <property type="protein sequence ID" value="AEC10399.1"/>
    <property type="molecule type" value="Genomic_DNA"/>
</dbReference>
<dbReference type="EMBL" id="AK117259">
    <property type="protein sequence ID" value="BAC41934.1"/>
    <property type="molecule type" value="mRNA"/>
</dbReference>
<dbReference type="EMBL" id="BT008353">
    <property type="protein sequence ID" value="AAP37712.1"/>
    <property type="molecule type" value="mRNA"/>
</dbReference>
<dbReference type="PIR" id="T02383">
    <property type="entry name" value="T02383"/>
</dbReference>
<dbReference type="RefSeq" id="NP_181956.2">
    <molecule id="O64862-1"/>
    <property type="nucleotide sequence ID" value="NM_129991.3"/>
</dbReference>
<dbReference type="SMR" id="O64862"/>
<dbReference type="BioGRID" id="4371">
    <property type="interactions" value="4"/>
</dbReference>
<dbReference type="FunCoup" id="O64862">
    <property type="interactions" value="3201"/>
</dbReference>
<dbReference type="IntAct" id="O64862">
    <property type="interactions" value="1"/>
</dbReference>
<dbReference type="STRING" id="3702.O64862"/>
<dbReference type="iPTMnet" id="O64862"/>
<dbReference type="PaxDb" id="3702-AT2G44270.2"/>
<dbReference type="ProteomicsDB" id="220504">
    <molecule id="O64862-1"/>
</dbReference>
<dbReference type="EnsemblPlants" id="AT2G44270.1">
    <molecule id="O64862-1"/>
    <property type="protein sequence ID" value="AT2G44270.1"/>
    <property type="gene ID" value="AT2G44270"/>
</dbReference>
<dbReference type="GeneID" id="819035"/>
<dbReference type="Gramene" id="AT2G44270.1">
    <molecule id="O64862-1"/>
    <property type="protein sequence ID" value="AT2G44270.1"/>
    <property type="gene ID" value="AT2G44270"/>
</dbReference>
<dbReference type="KEGG" id="ath:AT2G44270"/>
<dbReference type="Araport" id="AT2G44270"/>
<dbReference type="TAIR" id="AT2G44270">
    <property type="gene designation" value="ROL5"/>
</dbReference>
<dbReference type="eggNOG" id="KOG2840">
    <property type="taxonomic scope" value="Eukaryota"/>
</dbReference>
<dbReference type="HOGENOM" id="CLU_026481_1_2_1"/>
<dbReference type="InParanoid" id="O64862"/>
<dbReference type="OMA" id="KPVRGIC"/>
<dbReference type="PhylomeDB" id="O64862"/>
<dbReference type="UniPathway" id="UPA00988"/>
<dbReference type="PRO" id="PR:O64862"/>
<dbReference type="Proteomes" id="UP000006548">
    <property type="component" value="Chromosome 2"/>
</dbReference>
<dbReference type="ExpressionAtlas" id="O64862">
    <property type="expression patterns" value="baseline and differential"/>
</dbReference>
<dbReference type="GO" id="GO:0005737">
    <property type="term" value="C:cytoplasm"/>
    <property type="evidence" value="ECO:0007669"/>
    <property type="project" value="UniProtKB-SubCell"/>
</dbReference>
<dbReference type="GO" id="GO:0016779">
    <property type="term" value="F:nucleotidyltransferase activity"/>
    <property type="evidence" value="ECO:0007669"/>
    <property type="project" value="UniProtKB-UniRule"/>
</dbReference>
<dbReference type="GO" id="GO:0000049">
    <property type="term" value="F:tRNA binding"/>
    <property type="evidence" value="ECO:0007669"/>
    <property type="project" value="UniProtKB-UniRule"/>
</dbReference>
<dbReference type="GO" id="GO:0032447">
    <property type="term" value="P:protein urmylation"/>
    <property type="evidence" value="ECO:0007669"/>
    <property type="project" value="UniProtKB-UniRule"/>
</dbReference>
<dbReference type="GO" id="GO:0034227">
    <property type="term" value="P:tRNA thio-modification"/>
    <property type="evidence" value="ECO:0007669"/>
    <property type="project" value="UniProtKB-UniRule"/>
</dbReference>
<dbReference type="GO" id="GO:0002098">
    <property type="term" value="P:tRNA wobble uridine modification"/>
    <property type="evidence" value="ECO:0007669"/>
    <property type="project" value="UniProtKB-UniRule"/>
</dbReference>
<dbReference type="CDD" id="cd01713">
    <property type="entry name" value="CTU1-like"/>
    <property type="match status" value="1"/>
</dbReference>
<dbReference type="FunFam" id="3.40.50.620:FF:000054">
    <property type="entry name" value="Cytoplasmic tRNA 2-thiolation protein 1"/>
    <property type="match status" value="1"/>
</dbReference>
<dbReference type="Gene3D" id="3.40.50.620">
    <property type="entry name" value="HUPs"/>
    <property type="match status" value="1"/>
</dbReference>
<dbReference type="HAMAP" id="MF_03053">
    <property type="entry name" value="CTU1"/>
    <property type="match status" value="1"/>
</dbReference>
<dbReference type="InterPro" id="IPR056369">
    <property type="entry name" value="CTU1-like_ATP-bd"/>
</dbReference>
<dbReference type="InterPro" id="IPR032442">
    <property type="entry name" value="CTU1_C"/>
</dbReference>
<dbReference type="InterPro" id="IPR000541">
    <property type="entry name" value="Ncs6/Tuc1/Ctu1"/>
</dbReference>
<dbReference type="InterPro" id="IPR014729">
    <property type="entry name" value="Rossmann-like_a/b/a_fold"/>
</dbReference>
<dbReference type="InterPro" id="IPR011063">
    <property type="entry name" value="TilS/TtcA_N"/>
</dbReference>
<dbReference type="InterPro" id="IPR035107">
    <property type="entry name" value="tRNA_thiolation_TtcA_Ctu1"/>
</dbReference>
<dbReference type="NCBIfam" id="TIGR00269">
    <property type="entry name" value="TIGR00269 family protein"/>
    <property type="match status" value="1"/>
</dbReference>
<dbReference type="PANTHER" id="PTHR11807">
    <property type="entry name" value="ATPASES OF THE PP SUPERFAMILY-RELATED"/>
    <property type="match status" value="1"/>
</dbReference>
<dbReference type="PANTHER" id="PTHR11807:SF12">
    <property type="entry name" value="CYTOPLASMIC TRNA 2-THIOLATION PROTEIN 1"/>
    <property type="match status" value="1"/>
</dbReference>
<dbReference type="Pfam" id="PF01171">
    <property type="entry name" value="ATP_bind_3"/>
    <property type="match status" value="1"/>
</dbReference>
<dbReference type="Pfam" id="PF16503">
    <property type="entry name" value="zn-ribbon_14"/>
    <property type="match status" value="1"/>
</dbReference>
<dbReference type="PIRSF" id="PIRSF004976">
    <property type="entry name" value="ATPase_YdaO"/>
    <property type="match status" value="1"/>
</dbReference>
<dbReference type="SUPFAM" id="SSF52402">
    <property type="entry name" value="Adenine nucleotide alpha hydrolases-like"/>
    <property type="match status" value="1"/>
</dbReference>
<feature type="chain" id="PRO_0000368254" description="Cytoplasmic tRNA 2-thiolation protein 1">
    <location>
        <begin position="1"/>
        <end position="355"/>
    </location>
</feature>
<feature type="region of interest" description="Disordered" evidence="2">
    <location>
        <begin position="320"/>
        <end position="341"/>
    </location>
</feature>
<feature type="compositionally biased region" description="Basic and acidic residues" evidence="2">
    <location>
        <begin position="328"/>
        <end position="337"/>
    </location>
</feature>
<proteinExistence type="evidence at transcript level"/>
<comment type="function">
    <text evidence="1">Plays a central role in 2-thiolation of mcm(5)S(2)U at tRNA wobble positions of tRNA(Lys), tRNA(Glu) and tRNA(Gln). Directly binds tRNAs and probably acts by catalyzing adenylation of tRNAs, an intermediate required for 2-thiolation. It is unclear whether it acts as a sulfurtransferase that transfers sulfur from thiocarboxylated URM1 onto the uridine of tRNAs at wobble position.</text>
</comment>
<comment type="pathway">
    <text evidence="1">tRNA modification; 5-methoxycarbonylmethyl-2-thiouridine-tRNA biosynthesis.</text>
</comment>
<comment type="subcellular location">
    <subcellularLocation>
        <location evidence="1">Cytoplasm</location>
    </subcellularLocation>
</comment>
<comment type="alternative products">
    <event type="alternative splicing"/>
    <isoform>
        <id>O64862-1</id>
        <name>1</name>
        <sequence type="displayed"/>
    </isoform>
    <text>A number of isoforms are produced. According to EST sequences.</text>
</comment>
<comment type="similarity">
    <text evidence="1">Belongs to the TtcA family. CTU1/NCS6/ATPBD3 subfamily.</text>
</comment>
<comment type="sequence caution" evidence="3">
    <conflict type="erroneous gene model prediction">
        <sequence resource="EMBL-CDS" id="AAC16077"/>
    </conflict>
</comment>
<organism>
    <name type="scientific">Arabidopsis thaliana</name>
    <name type="common">Mouse-ear cress</name>
    <dbReference type="NCBI Taxonomy" id="3702"/>
    <lineage>
        <taxon>Eukaryota</taxon>
        <taxon>Viridiplantae</taxon>
        <taxon>Streptophyta</taxon>
        <taxon>Embryophyta</taxon>
        <taxon>Tracheophyta</taxon>
        <taxon>Spermatophyta</taxon>
        <taxon>Magnoliopsida</taxon>
        <taxon>eudicotyledons</taxon>
        <taxon>Gunneridae</taxon>
        <taxon>Pentapetalae</taxon>
        <taxon>rosids</taxon>
        <taxon>malvids</taxon>
        <taxon>Brassicales</taxon>
        <taxon>Brassicaceae</taxon>
        <taxon>Camelineae</taxon>
        <taxon>Arabidopsis</taxon>
    </lineage>
</organism>
<sequence length="355" mass="40279">MEAKNKKAVASRLCCLCNLRRPVLKRPKTLQQICRECFYEVFEEEIHQVIVQNRLFKSGERVAIGASGGKDSTVLAYVLSELNRRHNYGLDLFLLSIDEGITGYRDDSLETVKRNEVQYGLPLKIVSYKDLYGWTMDEIVKMIGLKNNCTFCGVFRRQALDRGAALLKVEKLVTGHNADDIAETVLLNILRGDIARLSRCTSITTGEDGPIPRCKPFKYTYEKEIVMYAYFKKLDYFSTECIYSPNAYRGFAREFIKDLERIRPRAILDIIKSGEDFRIATTTKMPEQGTCERCGYISSQKWCKACVLLEGLNRGLPKMGIGRPRGVNGDHNKETKKPGSVAKSIESKQCGSLDF</sequence>
<accession>O64862</accession>
<accession>Q8GZ19</accession>